<keyword id="KW-0804">Transcription</keyword>
<keyword id="KW-0889">Transcription antitermination</keyword>
<keyword id="KW-0805">Transcription regulation</keyword>
<keyword id="KW-0806">Transcription termination</keyword>
<dbReference type="EMBL" id="AE001439">
    <property type="protein sequence ID" value="AAD06704.1"/>
    <property type="molecule type" value="Genomic_DNA"/>
</dbReference>
<dbReference type="PIR" id="G71846">
    <property type="entry name" value="G71846"/>
</dbReference>
<dbReference type="SMR" id="Q9ZK20"/>
<dbReference type="KEGG" id="hpj:jhp_1126"/>
<dbReference type="eggNOG" id="COG0250">
    <property type="taxonomic scope" value="Bacteria"/>
</dbReference>
<dbReference type="Proteomes" id="UP000000804">
    <property type="component" value="Chromosome"/>
</dbReference>
<dbReference type="GO" id="GO:0005829">
    <property type="term" value="C:cytosol"/>
    <property type="evidence" value="ECO:0007669"/>
    <property type="project" value="TreeGrafter"/>
</dbReference>
<dbReference type="GO" id="GO:0006353">
    <property type="term" value="P:DNA-templated transcription termination"/>
    <property type="evidence" value="ECO:0007669"/>
    <property type="project" value="UniProtKB-UniRule"/>
</dbReference>
<dbReference type="GO" id="GO:0032784">
    <property type="term" value="P:regulation of DNA-templated transcription elongation"/>
    <property type="evidence" value="ECO:0007669"/>
    <property type="project" value="InterPro"/>
</dbReference>
<dbReference type="GO" id="GO:0031564">
    <property type="term" value="P:transcription antitermination"/>
    <property type="evidence" value="ECO:0007669"/>
    <property type="project" value="UniProtKB-UniRule"/>
</dbReference>
<dbReference type="GO" id="GO:0140673">
    <property type="term" value="P:transcription elongation-coupled chromatin remodeling"/>
    <property type="evidence" value="ECO:0007669"/>
    <property type="project" value="InterPro"/>
</dbReference>
<dbReference type="CDD" id="cd06091">
    <property type="entry name" value="KOW_NusG"/>
    <property type="match status" value="1"/>
</dbReference>
<dbReference type="CDD" id="cd09891">
    <property type="entry name" value="NGN_Bact_1"/>
    <property type="match status" value="1"/>
</dbReference>
<dbReference type="FunFam" id="2.30.30.30:FF:000002">
    <property type="entry name" value="Transcription termination/antitermination factor NusG"/>
    <property type="match status" value="1"/>
</dbReference>
<dbReference type="Gene3D" id="2.30.30.30">
    <property type="match status" value="1"/>
</dbReference>
<dbReference type="Gene3D" id="3.30.70.940">
    <property type="entry name" value="NusG, N-terminal domain"/>
    <property type="match status" value="1"/>
</dbReference>
<dbReference type="HAMAP" id="MF_00948">
    <property type="entry name" value="NusG"/>
    <property type="match status" value="1"/>
</dbReference>
<dbReference type="InterPro" id="IPR005824">
    <property type="entry name" value="KOW"/>
</dbReference>
<dbReference type="InterPro" id="IPR047050">
    <property type="entry name" value="NGN"/>
</dbReference>
<dbReference type="InterPro" id="IPR006645">
    <property type="entry name" value="NGN-like_dom"/>
</dbReference>
<dbReference type="InterPro" id="IPR036735">
    <property type="entry name" value="NGN_dom_sf"/>
</dbReference>
<dbReference type="InterPro" id="IPR043425">
    <property type="entry name" value="NusG-like"/>
</dbReference>
<dbReference type="InterPro" id="IPR014722">
    <property type="entry name" value="Rib_uL2_dom2"/>
</dbReference>
<dbReference type="InterPro" id="IPR001062">
    <property type="entry name" value="Transcrpt_antiterm_NusG"/>
</dbReference>
<dbReference type="InterPro" id="IPR015869">
    <property type="entry name" value="Transcrpt_antiterm_NusG_bac_CS"/>
</dbReference>
<dbReference type="InterPro" id="IPR008991">
    <property type="entry name" value="Translation_prot_SH3-like_sf"/>
</dbReference>
<dbReference type="NCBIfam" id="TIGR00922">
    <property type="entry name" value="nusG"/>
    <property type="match status" value="1"/>
</dbReference>
<dbReference type="PANTHER" id="PTHR30265">
    <property type="entry name" value="RHO-INTERACTING TRANSCRIPTION TERMINATION FACTOR NUSG"/>
    <property type="match status" value="1"/>
</dbReference>
<dbReference type="PANTHER" id="PTHR30265:SF2">
    <property type="entry name" value="TRANSCRIPTION TERMINATION_ANTITERMINATION PROTEIN NUSG"/>
    <property type="match status" value="1"/>
</dbReference>
<dbReference type="Pfam" id="PF02357">
    <property type="entry name" value="NusG"/>
    <property type="match status" value="1"/>
</dbReference>
<dbReference type="PRINTS" id="PR00338">
    <property type="entry name" value="NUSGTNSCPFCT"/>
</dbReference>
<dbReference type="SMART" id="SM00739">
    <property type="entry name" value="KOW"/>
    <property type="match status" value="1"/>
</dbReference>
<dbReference type="SMART" id="SM00738">
    <property type="entry name" value="NGN"/>
    <property type="match status" value="1"/>
</dbReference>
<dbReference type="SUPFAM" id="SSF82679">
    <property type="entry name" value="N-utilization substance G protein NusG, N-terminal domain"/>
    <property type="match status" value="1"/>
</dbReference>
<dbReference type="SUPFAM" id="SSF50104">
    <property type="entry name" value="Translation proteins SH3-like domain"/>
    <property type="match status" value="1"/>
</dbReference>
<dbReference type="PROSITE" id="PS01014">
    <property type="entry name" value="NUSG"/>
    <property type="match status" value="1"/>
</dbReference>
<reference key="1">
    <citation type="journal article" date="1999" name="Nature">
        <title>Genomic sequence comparison of two unrelated isolates of the human gastric pathogen Helicobacter pylori.</title>
        <authorList>
            <person name="Alm R.A."/>
            <person name="Ling L.-S.L."/>
            <person name="Moir D.T."/>
            <person name="King B.L."/>
            <person name="Brown E.D."/>
            <person name="Doig P.C."/>
            <person name="Smith D.R."/>
            <person name="Noonan B."/>
            <person name="Guild B.C."/>
            <person name="deJonge B.L."/>
            <person name="Carmel G."/>
            <person name="Tummino P.J."/>
            <person name="Caruso A."/>
            <person name="Uria-Nickelsen M."/>
            <person name="Mills D.M."/>
            <person name="Ives C."/>
            <person name="Gibson R."/>
            <person name="Merberg D."/>
            <person name="Mills S.D."/>
            <person name="Jiang Q."/>
            <person name="Taylor D.E."/>
            <person name="Vovis G.F."/>
            <person name="Trust T.J."/>
        </authorList>
    </citation>
    <scope>NUCLEOTIDE SEQUENCE [LARGE SCALE GENOMIC DNA]</scope>
    <source>
        <strain>J99 / ATCC 700824</strain>
    </source>
</reference>
<name>NUSG_HELPJ</name>
<gene>
    <name evidence="1" type="primary">nusG</name>
    <name type="ordered locus">jhp_1126</name>
</gene>
<comment type="function">
    <text evidence="1">Participates in transcription elongation, termination and antitermination.</text>
</comment>
<comment type="similarity">
    <text evidence="1">Belongs to the NusG family.</text>
</comment>
<evidence type="ECO:0000255" key="1">
    <source>
        <dbReference type="HAMAP-Rule" id="MF_00948"/>
    </source>
</evidence>
<proteinExistence type="inferred from homology"/>
<organism>
    <name type="scientific">Helicobacter pylori (strain J99 / ATCC 700824)</name>
    <name type="common">Campylobacter pylori J99</name>
    <dbReference type="NCBI Taxonomy" id="85963"/>
    <lineage>
        <taxon>Bacteria</taxon>
        <taxon>Pseudomonadati</taxon>
        <taxon>Campylobacterota</taxon>
        <taxon>Epsilonproteobacteria</taxon>
        <taxon>Campylobacterales</taxon>
        <taxon>Helicobacteraceae</taxon>
        <taxon>Helicobacter</taxon>
    </lineage>
</organism>
<accession>Q9ZK20</accession>
<feature type="chain" id="PRO_0000113931" description="Transcription termination/antitermination protein NusG">
    <location>
        <begin position="1"/>
        <end position="176"/>
    </location>
</feature>
<feature type="domain" description="KOW" evidence="1">
    <location>
        <begin position="125"/>
        <end position="149"/>
    </location>
</feature>
<sequence length="176" mass="20305">MMDWYAIQTYSGSEQSVKKAIENLANDHDIRDRIQEIIVPTEDIIEVSKKSKTKVMERSLYPGYVFIKVDLDTVLWHKIQSLPRVSRFIGENKKPTPLSEADIGHILEKMNNRAAPKPKIFFEQGEVVRVVEGPFANFTATVEEYDVEHRKLKLNVSIFGRTTPIEILYSQVEKII</sequence>
<protein>
    <recommendedName>
        <fullName evidence="1">Transcription termination/antitermination protein NusG</fullName>
    </recommendedName>
</protein>